<keyword id="KW-0010">Activator</keyword>
<keyword id="KW-0175">Coiled coil</keyword>
<keyword id="KW-0963">Cytoplasm</keyword>
<keyword id="KW-1185">Reference proteome</keyword>
<keyword id="KW-0804">Transcription</keyword>
<keyword id="KW-0805">Transcription regulation</keyword>
<protein>
    <recommendedName>
        <fullName evidence="1">Sigma factor-binding protein Crl</fullName>
    </recommendedName>
</protein>
<dbReference type="EMBL" id="CP000468">
    <property type="protein sequence ID" value="ABI99740.1"/>
    <property type="molecule type" value="Genomic_DNA"/>
</dbReference>
<dbReference type="RefSeq" id="WP_000174703.1">
    <property type="nucleotide sequence ID" value="NZ_CADILS010000061.1"/>
</dbReference>
<dbReference type="SMR" id="A1A7V1"/>
<dbReference type="KEGG" id="ecv:APECO1_1729"/>
<dbReference type="HOGENOM" id="CLU_136773_0_0_6"/>
<dbReference type="Proteomes" id="UP000008216">
    <property type="component" value="Chromosome"/>
</dbReference>
<dbReference type="GO" id="GO:0005737">
    <property type="term" value="C:cytoplasm"/>
    <property type="evidence" value="ECO:0007669"/>
    <property type="project" value="UniProtKB-SubCell"/>
</dbReference>
<dbReference type="GO" id="GO:0045893">
    <property type="term" value="P:positive regulation of DNA-templated transcription"/>
    <property type="evidence" value="ECO:0007669"/>
    <property type="project" value="UniProtKB-UniRule"/>
</dbReference>
<dbReference type="FunFam" id="3.30.310.230:FF:000001">
    <property type="entry name" value="Sigma factor-binding protein Crl"/>
    <property type="match status" value="1"/>
</dbReference>
<dbReference type="Gene3D" id="3.30.310.230">
    <property type="entry name" value="Sigma factor-binding protein Crl monomer"/>
    <property type="match status" value="1"/>
</dbReference>
<dbReference type="HAMAP" id="MF_01178">
    <property type="entry name" value="Crl"/>
    <property type="match status" value="1"/>
</dbReference>
<dbReference type="InterPro" id="IPR009986">
    <property type="entry name" value="Tscrpt_reg_Crl"/>
</dbReference>
<dbReference type="InterPro" id="IPR038208">
    <property type="entry name" value="Tscrpt_reg_Crl_sf"/>
</dbReference>
<dbReference type="NCBIfam" id="NF008217">
    <property type="entry name" value="PRK10984.1"/>
    <property type="match status" value="1"/>
</dbReference>
<dbReference type="Pfam" id="PF07417">
    <property type="entry name" value="Crl"/>
    <property type="match status" value="1"/>
</dbReference>
<name>CRL_ECOK1</name>
<accession>A1A7V1</accession>
<reference key="1">
    <citation type="journal article" date="2007" name="J. Bacteriol.">
        <title>The genome sequence of avian pathogenic Escherichia coli strain O1:K1:H7 shares strong similarities with human extraintestinal pathogenic E. coli genomes.</title>
        <authorList>
            <person name="Johnson T.J."/>
            <person name="Kariyawasam S."/>
            <person name="Wannemuehler Y."/>
            <person name="Mangiamele P."/>
            <person name="Johnson S.J."/>
            <person name="Doetkott C."/>
            <person name="Skyberg J.A."/>
            <person name="Lynne A.M."/>
            <person name="Johnson J.R."/>
            <person name="Nolan L.K."/>
        </authorList>
    </citation>
    <scope>NUCLEOTIDE SEQUENCE [LARGE SCALE GENOMIC DNA]</scope>
</reference>
<feature type="chain" id="PRO_1000065786" description="Sigma factor-binding protein Crl">
    <location>
        <begin position="1"/>
        <end position="133"/>
    </location>
</feature>
<feature type="region of interest" description="Essential for activity" evidence="1">
    <location>
        <begin position="99"/>
        <end position="122"/>
    </location>
</feature>
<feature type="coiled-coil region" evidence="1">
    <location>
        <begin position="90"/>
        <end position="116"/>
    </location>
</feature>
<evidence type="ECO:0000255" key="1">
    <source>
        <dbReference type="HAMAP-Rule" id="MF_01178"/>
    </source>
</evidence>
<organism>
    <name type="scientific">Escherichia coli O1:K1 / APEC</name>
    <dbReference type="NCBI Taxonomy" id="405955"/>
    <lineage>
        <taxon>Bacteria</taxon>
        <taxon>Pseudomonadati</taxon>
        <taxon>Pseudomonadota</taxon>
        <taxon>Gammaproteobacteria</taxon>
        <taxon>Enterobacterales</taxon>
        <taxon>Enterobacteriaceae</taxon>
        <taxon>Escherichia</taxon>
    </lineage>
</organism>
<sequence length="133" mass="15600">MTLPSGHPKSRLVKKFTALGPYIREGKCEDNRFFFDCLAVCVNVKPAPEVREFWGWWMELEAQESRFTYSYQFGLFDKAGDWTSVQIKDAEVVERLEHTLREFHEKLRELLATLNLKLEPADDFRDEPVKLTA</sequence>
<comment type="function">
    <text evidence="1">Binds to the sigma-S subunit of RNA polymerase, activating expression of sigma-S-regulated genes. Stimulates RNA polymerase holoenzyme formation and may bind to several other sigma factors, such as sigma-70 and sigma-32.</text>
</comment>
<comment type="subcellular location">
    <subcellularLocation>
        <location evidence="1">Cytoplasm</location>
    </subcellularLocation>
</comment>
<comment type="similarity">
    <text evidence="1">Belongs to the Crl family.</text>
</comment>
<gene>
    <name evidence="1" type="primary">crl</name>
    <name type="ordered locus">Ecok1_02470</name>
    <name type="ORF">APECO1_1729</name>
</gene>
<proteinExistence type="inferred from homology"/>